<accession>Q00947</accession>
<accession>D6VT88</accession>
<dbReference type="EMBL" id="M88597">
    <property type="protein sequence ID" value="AAA35124.1"/>
    <property type="molecule type" value="Genomic_DNA"/>
</dbReference>
<dbReference type="EMBL" id="U33050">
    <property type="protein sequence ID" value="AAB64913.1"/>
    <property type="status" value="ALT_INIT"/>
    <property type="molecule type" value="Genomic_DNA"/>
</dbReference>
<dbReference type="EMBL" id="BK006938">
    <property type="protein sequence ID" value="DAA12298.1"/>
    <property type="molecule type" value="Genomic_DNA"/>
</dbReference>
<dbReference type="PIR" id="S69631">
    <property type="entry name" value="S69631"/>
</dbReference>
<dbReference type="RefSeq" id="NP_010751.4">
    <property type="nucleotide sequence ID" value="NM_001180771.3"/>
</dbReference>
<dbReference type="BioGRID" id="32517">
    <property type="interactions" value="216"/>
</dbReference>
<dbReference type="DIP" id="DIP-1272N"/>
<dbReference type="FunCoup" id="Q00947">
    <property type="interactions" value="1070"/>
</dbReference>
<dbReference type="IntAct" id="Q00947">
    <property type="interactions" value="8"/>
</dbReference>
<dbReference type="MINT" id="Q00947"/>
<dbReference type="STRING" id="4932.YDR463W"/>
<dbReference type="iPTMnet" id="Q00947"/>
<dbReference type="PaxDb" id="4932-YDR463W"/>
<dbReference type="PeptideAtlas" id="Q00947"/>
<dbReference type="EnsemblFungi" id="YDR463W_mRNA">
    <property type="protein sequence ID" value="YDR463W"/>
    <property type="gene ID" value="YDR463W"/>
</dbReference>
<dbReference type="GeneID" id="852074"/>
<dbReference type="KEGG" id="sce:YDR463W"/>
<dbReference type="AGR" id="SGD:S000002871"/>
<dbReference type="SGD" id="S000002871">
    <property type="gene designation" value="STP1"/>
</dbReference>
<dbReference type="VEuPathDB" id="FungiDB:YDR463W"/>
<dbReference type="eggNOG" id="ENOG502S1NP">
    <property type="taxonomic scope" value="Eukaryota"/>
</dbReference>
<dbReference type="HOGENOM" id="CLU_025391_0_0_1"/>
<dbReference type="InParanoid" id="Q00947"/>
<dbReference type="OMA" id="LKMIKTS"/>
<dbReference type="OrthoDB" id="9439903at2759"/>
<dbReference type="BioCyc" id="YEAST:G3O-29991-MONOMER"/>
<dbReference type="BioGRID-ORCS" id="852074">
    <property type="hits" value="4 hits in 13 CRISPR screens"/>
</dbReference>
<dbReference type="PRO" id="PR:Q00947"/>
<dbReference type="Proteomes" id="UP000002311">
    <property type="component" value="Chromosome IV"/>
</dbReference>
<dbReference type="RNAct" id="Q00947">
    <property type="molecule type" value="protein"/>
</dbReference>
<dbReference type="GO" id="GO:0005737">
    <property type="term" value="C:cytoplasm"/>
    <property type="evidence" value="ECO:0000314"/>
    <property type="project" value="SGD"/>
</dbReference>
<dbReference type="GO" id="GO:0005634">
    <property type="term" value="C:nucleus"/>
    <property type="evidence" value="ECO:0000314"/>
    <property type="project" value="SGD"/>
</dbReference>
<dbReference type="GO" id="GO:0005886">
    <property type="term" value="C:plasma membrane"/>
    <property type="evidence" value="ECO:0000314"/>
    <property type="project" value="SGD"/>
</dbReference>
<dbReference type="GO" id="GO:0001228">
    <property type="term" value="F:DNA-binding transcription activator activity, RNA polymerase II-specific"/>
    <property type="evidence" value="ECO:0000314"/>
    <property type="project" value="SGD"/>
</dbReference>
<dbReference type="GO" id="GO:0000981">
    <property type="term" value="F:DNA-binding transcription factor activity, RNA polymerase II-specific"/>
    <property type="evidence" value="ECO:0000318"/>
    <property type="project" value="GO_Central"/>
</dbReference>
<dbReference type="GO" id="GO:0000978">
    <property type="term" value="F:RNA polymerase II cis-regulatory region sequence-specific DNA binding"/>
    <property type="evidence" value="ECO:0000314"/>
    <property type="project" value="SGD"/>
</dbReference>
<dbReference type="GO" id="GO:0008270">
    <property type="term" value="F:zinc ion binding"/>
    <property type="evidence" value="ECO:0007669"/>
    <property type="project" value="UniProtKB-KW"/>
</dbReference>
<dbReference type="GO" id="GO:0045893">
    <property type="term" value="P:positive regulation of DNA-templated transcription"/>
    <property type="evidence" value="ECO:0000314"/>
    <property type="project" value="SGD"/>
</dbReference>
<dbReference type="GO" id="GO:0045944">
    <property type="term" value="P:positive regulation of transcription by RNA polymerase II"/>
    <property type="evidence" value="ECO:0000315"/>
    <property type="project" value="SGD"/>
</dbReference>
<dbReference type="GO" id="GO:0006357">
    <property type="term" value="P:regulation of transcription by RNA polymerase II"/>
    <property type="evidence" value="ECO:0000318"/>
    <property type="project" value="GO_Central"/>
</dbReference>
<dbReference type="GO" id="GO:0008033">
    <property type="term" value="P:tRNA processing"/>
    <property type="evidence" value="ECO:0007669"/>
    <property type="project" value="UniProtKB-KW"/>
</dbReference>
<dbReference type="FunFam" id="3.30.160.60:FF:002194">
    <property type="entry name" value="STP1p Transcription factor"/>
    <property type="match status" value="1"/>
</dbReference>
<dbReference type="Gene3D" id="3.30.160.60">
    <property type="entry name" value="Classic Zinc Finger"/>
    <property type="match status" value="1"/>
</dbReference>
<dbReference type="InterPro" id="IPR051643">
    <property type="entry name" value="Transcr_Reg_ZincFinger"/>
</dbReference>
<dbReference type="InterPro" id="IPR036236">
    <property type="entry name" value="Znf_C2H2_sf"/>
</dbReference>
<dbReference type="InterPro" id="IPR013087">
    <property type="entry name" value="Znf_C2H2_type"/>
</dbReference>
<dbReference type="PANTHER" id="PTHR24396:SF19">
    <property type="entry name" value="FI01119P"/>
    <property type="match status" value="1"/>
</dbReference>
<dbReference type="PANTHER" id="PTHR24396">
    <property type="entry name" value="ZINC FINGER PROTEIN"/>
    <property type="match status" value="1"/>
</dbReference>
<dbReference type="SMART" id="SM00355">
    <property type="entry name" value="ZnF_C2H2"/>
    <property type="match status" value="2"/>
</dbReference>
<dbReference type="SUPFAM" id="SSF57667">
    <property type="entry name" value="beta-beta-alpha zinc fingers"/>
    <property type="match status" value="1"/>
</dbReference>
<dbReference type="PROSITE" id="PS00028">
    <property type="entry name" value="ZINC_FINGER_C2H2_1"/>
    <property type="match status" value="1"/>
</dbReference>
<dbReference type="PROSITE" id="PS50157">
    <property type="entry name" value="ZINC_FINGER_C2H2_2"/>
    <property type="match status" value="1"/>
</dbReference>
<gene>
    <name type="primary">STP1</name>
    <name type="synonym">BAP1</name>
    <name type="synonym">SSY2</name>
    <name type="ordered locus">YDR463W</name>
    <name type="ORF">D8035.7</name>
</gene>
<name>STP1_YEAST</name>
<comment type="function">
    <text evidence="3 6 7 8 10 11 13 14 15 16 17">Transcription factor involved in the regulation of gene expression in response to extracellular amino acid levels. Synthesized as latent cytoplasmic precursor, which, upon a signal initiated by the plasma membrane SPS (SSY1-PTR3-SSY5) amino acid sensor system, becomes proteolytically activated and relocates to the nucleus, where it induces the expression of SPS-sensor-regulated genes, including the amino-acid permeases AGP1, BAP2, BAP3 and GNP1. Binding to promoters is facilitated by DAL81. Involved in the repression of genes subject to nitrogen catabolite repression and genes involved in stress response. Negatively regulated by inner nuclear membrane proteins ASI1, ASI2 and ASI3, which prevent unprocessed precursor forms that escape cytoplasmic anchoring from inducing SPS-sensor-regulated genes. May be involved in pre-tRNA splicing.</text>
</comment>
<comment type="subunit">
    <text evidence="12">Interacts (via Region II) with SSY5; protease component of the SPS-sensor.</text>
</comment>
<comment type="subcellular location">
    <subcellularLocation>
        <location>Cell membrane</location>
        <topology>Peripheral membrane protein</topology>
        <orientation>Cytoplasmic side</orientation>
    </subcellularLocation>
    <subcellularLocation>
        <location>Nucleus</location>
    </subcellularLocation>
    <text>Localizes to the cytoplasm in its unprocessed form and is targeted to the nucleus after proteolytic processing upon induction by amino acids. The SCF(MET30) ubiquitin ligase complex negatively regulates nuclear accumulation of the processed form in the absence of high extracellular methionine levels.</text>
</comment>
<comment type="domain">
    <text evidence="18">The N-terminal inhibitory domain contains conserved sequence elements important for cytoplasmic retention (Region I) and proteolytic processing (Region II) of the protein. Region I is also required for ASI1/2/3-mediated negative regulation of transcription.</text>
</comment>
<comment type="PTM">
    <text evidence="4 9">Phosphorylated by casein kinase I. Phosphorylation is not dependent on the extracellular amino acid levels, but is a prerequisite for proteolytic processing.</text>
</comment>
<comment type="PTM">
    <text>Activated by the amino acid-induced proteolytic removal of an N-terminal inhibitory domain by serine protease SSY5, an intrinsic component of the SPS-sensor. Processing requires at least 2 components of the SCF(GRR1) ubiquitin ligase complex, namely the F-box protein GRR1 and the E2 enzyme CDC34, but does not depend on the proteasome. Processing is negatively regulated by the protein phosphatase 2A regulatory subunit RTS1.</text>
</comment>
<comment type="miscellaneous">
    <text evidence="5">Present with 1310 molecules/cell in log phase SD medium.</text>
</comment>
<comment type="caution">
    <text evidence="20">Was originally thought to be an amino-acid permease.</text>
</comment>
<comment type="sequence caution" evidence="19">
    <conflict type="erroneous initiation">
        <sequence resource="EMBL-CDS" id="AAB64913"/>
    </conflict>
</comment>
<protein>
    <recommendedName>
        <fullName>Transcription factor STP1</fullName>
    </recommendedName>
</protein>
<sequence length="519" mass="58088">MPSTTLLFPQKHIRAIPGKIYAFFRELVSGVIISKPDLSHHYSCENATKEEGKDAADEEKTTTSLFPESNNIDRSLNGGCSVIPCSMDVSDLNTPISITLSPENRIKSEVNAKSLLGSRPEQDTGAPIKMSTGVTSSPLSPSGSTPEHSTKVLNNGEEEFICHYCDATFRIRGYLTRHIKKHAIEKAYHCPFFNSATPPDLRCHNSGGFSRRDTYKTHLKARHVLYPKGVKPQDRNKSSGHCAQCGEYFSTIENFVENHIESGDCKALPQGYTKKNEKRSGKLRKIKTSNGHSRFISTSQSVVEPKVLFNKDAVEAMTIVANNSSGNDIISKYGNNKLMLNSENFKVDIPKRKRKYIKKKQQQVSGSTVTTPEVATQNNQEVAPDEISSATIFSPFDTHLLEPVPSSSSESSAEVMFHGKQMKNFLIDINSFTNQQQQAQDNPSFLPLDIEQSSYDLSEDAMSYPIISTQSNRDCTQYDNTKISQILQSQLNPEYLSENHMRETQQYLNFYNDNFGSQF</sequence>
<proteinExistence type="evidence at protein level"/>
<reference key="1">
    <citation type="journal article" date="1992" name="Mol. Cell. Biol.">
        <title>STP1, a gene involved in pre-tRNA processing, encodes a nuclear protein containing zinc finger motifs.</title>
        <authorList>
            <person name="Wang S.S."/>
            <person name="Stanford D.R."/>
            <person name="Silvers C.D."/>
            <person name="Hopper A.K."/>
        </authorList>
    </citation>
    <scope>NUCLEOTIDE SEQUENCE [GENOMIC DNA]</scope>
    <scope>IDENTIFICATION OF INITIATION SITE</scope>
    <scope>SUBCELLULAR LOCATION</scope>
</reference>
<reference key="2">
    <citation type="journal article" date="1997" name="Nature">
        <title>The nucleotide sequence of Saccharomyces cerevisiae chromosome IV.</title>
        <authorList>
            <person name="Jacq C."/>
            <person name="Alt-Moerbe J."/>
            <person name="Andre B."/>
            <person name="Arnold W."/>
            <person name="Bahr A."/>
            <person name="Ballesta J.P.G."/>
            <person name="Bargues M."/>
            <person name="Baron L."/>
            <person name="Becker A."/>
            <person name="Biteau N."/>
            <person name="Bloecker H."/>
            <person name="Blugeon C."/>
            <person name="Boskovic J."/>
            <person name="Brandt P."/>
            <person name="Brueckner M."/>
            <person name="Buitrago M.J."/>
            <person name="Coster F."/>
            <person name="Delaveau T."/>
            <person name="del Rey F."/>
            <person name="Dujon B."/>
            <person name="Eide L.G."/>
            <person name="Garcia-Cantalejo J.M."/>
            <person name="Goffeau A."/>
            <person name="Gomez-Peris A."/>
            <person name="Granotier C."/>
            <person name="Hanemann V."/>
            <person name="Hankeln T."/>
            <person name="Hoheisel J.D."/>
            <person name="Jaeger W."/>
            <person name="Jimenez A."/>
            <person name="Jonniaux J.-L."/>
            <person name="Kraemer C."/>
            <person name="Kuester H."/>
            <person name="Laamanen P."/>
            <person name="Legros Y."/>
            <person name="Louis E.J."/>
            <person name="Moeller-Rieker S."/>
            <person name="Monnet A."/>
            <person name="Moro M."/>
            <person name="Mueller-Auer S."/>
            <person name="Nussbaumer B."/>
            <person name="Paricio N."/>
            <person name="Paulin L."/>
            <person name="Perea J."/>
            <person name="Perez-Alonso M."/>
            <person name="Perez-Ortin J.E."/>
            <person name="Pohl T.M."/>
            <person name="Prydz H."/>
            <person name="Purnelle B."/>
            <person name="Rasmussen S.W."/>
            <person name="Remacha M.A."/>
            <person name="Revuelta J.L."/>
            <person name="Rieger M."/>
            <person name="Salom D."/>
            <person name="Saluz H.P."/>
            <person name="Saiz J.E."/>
            <person name="Saren A.-M."/>
            <person name="Schaefer M."/>
            <person name="Scharfe M."/>
            <person name="Schmidt E.R."/>
            <person name="Schneider C."/>
            <person name="Scholler P."/>
            <person name="Schwarz S."/>
            <person name="Soler-Mira A."/>
            <person name="Urrestarazu L.A."/>
            <person name="Verhasselt P."/>
            <person name="Vissers S."/>
            <person name="Voet M."/>
            <person name="Volckaert G."/>
            <person name="Wagner G."/>
            <person name="Wambutt R."/>
            <person name="Wedler E."/>
            <person name="Wedler H."/>
            <person name="Woelfl S."/>
            <person name="Harris D.E."/>
            <person name="Bowman S."/>
            <person name="Brown D."/>
            <person name="Churcher C.M."/>
            <person name="Connor R."/>
            <person name="Dedman K."/>
            <person name="Gentles S."/>
            <person name="Hamlin N."/>
            <person name="Hunt S."/>
            <person name="Jones L."/>
            <person name="McDonald S."/>
            <person name="Murphy L.D."/>
            <person name="Niblett D."/>
            <person name="Odell C."/>
            <person name="Oliver K."/>
            <person name="Rajandream M.A."/>
            <person name="Richards C."/>
            <person name="Shore L."/>
            <person name="Walsh S.V."/>
            <person name="Barrell B.G."/>
            <person name="Dietrich F.S."/>
            <person name="Mulligan J.T."/>
            <person name="Allen E."/>
            <person name="Araujo R."/>
            <person name="Aviles E."/>
            <person name="Berno A."/>
            <person name="Carpenter J."/>
            <person name="Chen E."/>
            <person name="Cherry J.M."/>
            <person name="Chung E."/>
            <person name="Duncan M."/>
            <person name="Hunicke-Smith S."/>
            <person name="Hyman R.W."/>
            <person name="Komp C."/>
            <person name="Lashkari D."/>
            <person name="Lew H."/>
            <person name="Lin D."/>
            <person name="Mosedale D."/>
            <person name="Nakahara K."/>
            <person name="Namath A."/>
            <person name="Oefner P."/>
            <person name="Oh C."/>
            <person name="Petel F.X."/>
            <person name="Roberts D."/>
            <person name="Schramm S."/>
            <person name="Schroeder M."/>
            <person name="Shogren T."/>
            <person name="Shroff N."/>
            <person name="Winant A."/>
            <person name="Yelton M.A."/>
            <person name="Botstein D."/>
            <person name="Davis R.W."/>
            <person name="Johnston M."/>
            <person name="Andrews S."/>
            <person name="Brinkman R."/>
            <person name="Cooper J."/>
            <person name="Ding H."/>
            <person name="Du Z."/>
            <person name="Favello A."/>
            <person name="Fulton L."/>
            <person name="Gattung S."/>
            <person name="Greco T."/>
            <person name="Hallsworth K."/>
            <person name="Hawkins J."/>
            <person name="Hillier L.W."/>
            <person name="Jier M."/>
            <person name="Johnson D."/>
            <person name="Johnston L."/>
            <person name="Kirsten J."/>
            <person name="Kucaba T."/>
            <person name="Langston Y."/>
            <person name="Latreille P."/>
            <person name="Le T."/>
            <person name="Mardis E."/>
            <person name="Menezes S."/>
            <person name="Miller N."/>
            <person name="Nhan M."/>
            <person name="Pauley A."/>
            <person name="Peluso D."/>
            <person name="Rifkin L."/>
            <person name="Riles L."/>
            <person name="Taich A."/>
            <person name="Trevaskis E."/>
            <person name="Vignati D."/>
            <person name="Wilcox L."/>
            <person name="Wohldman P."/>
            <person name="Vaudin M."/>
            <person name="Wilson R."/>
            <person name="Waterston R."/>
            <person name="Albermann K."/>
            <person name="Hani J."/>
            <person name="Heumann K."/>
            <person name="Kleine K."/>
            <person name="Mewes H.-W."/>
            <person name="Zollner A."/>
            <person name="Zaccaria P."/>
        </authorList>
    </citation>
    <scope>NUCLEOTIDE SEQUENCE [LARGE SCALE GENOMIC DNA]</scope>
    <source>
        <strain>ATCC 204508 / S288c</strain>
    </source>
</reference>
<reference key="3">
    <citation type="journal article" date="2014" name="G3 (Bethesda)">
        <title>The reference genome sequence of Saccharomyces cerevisiae: Then and now.</title>
        <authorList>
            <person name="Engel S.R."/>
            <person name="Dietrich F.S."/>
            <person name="Fisk D.G."/>
            <person name="Binkley G."/>
            <person name="Balakrishnan R."/>
            <person name="Costanzo M.C."/>
            <person name="Dwight S.S."/>
            <person name="Hitz B.C."/>
            <person name="Karra K."/>
            <person name="Nash R.S."/>
            <person name="Weng S."/>
            <person name="Wong E.D."/>
            <person name="Lloyd P."/>
            <person name="Skrzypek M.S."/>
            <person name="Miyasato S.R."/>
            <person name="Simison M."/>
            <person name="Cherry J.M."/>
        </authorList>
    </citation>
    <scope>GENOME REANNOTATION</scope>
    <source>
        <strain>ATCC 204508 / S288c</strain>
    </source>
</reference>
<reference key="4">
    <citation type="journal article" date="1988" name="Mol. Cell. Biol.">
        <title>Isolation of a yeast gene involved in species-specific pre-tRNA processing.</title>
        <authorList>
            <person name="Wang S.S."/>
            <person name="Hopper A.K."/>
        </authorList>
    </citation>
    <scope>FUNCTION IN TRNA MATURATION</scope>
</reference>
<reference key="5">
    <citation type="journal article" date="1991" name="Yeast">
        <title>A high-affinity uptake system for branched-chain amino acids in Saccharomyces cerevisiae.</title>
        <authorList>
            <person name="Tullin S."/>
            <person name="Gjermansen C."/>
            <person name="Kielland-Brandt M.C."/>
        </authorList>
    </citation>
    <scope>FUNCTION</scope>
</reference>
<reference key="6">
    <citation type="journal article" date="1997" name="Curr. Genet.">
        <title>STP1, a gene involved in pre-tRNA processing in yeast, is important for amino-acid uptake and transcription of the permease gene BAP2.</title>
        <authorList>
            <person name="Joergensen M.U."/>
            <person name="Gjermansen C."/>
            <person name="Andersen H.A."/>
            <person name="Kielland-Brandt M.C."/>
        </authorList>
    </citation>
    <scope>FUNCTION IN TRANSCRIPTION REGULATION</scope>
</reference>
<reference key="7">
    <citation type="journal article" date="1997" name="Nucleic Acids Res.">
        <title>Variations of the C2H2 zinc finger motif in the yeast genome and classification of yeast zinc finger proteins.</title>
        <authorList>
            <person name="Boehm S."/>
            <person name="Frishman D."/>
            <person name="Mewes H.-W."/>
        </authorList>
    </citation>
    <scope>DOMAIN ATYPICAL ZINC-FINGER</scope>
</reference>
<reference key="8">
    <citation type="journal article" date="2000" name="Nucleic Acids Res.">
        <title>Stp1p, Stp2p and Abf1p are involved in regulation of expression of the amino acid transporter gene BAP3 of Saccharomyces cerevisiae.</title>
        <authorList>
            <person name="de Boer M."/>
            <person name="Nielsen P.S."/>
            <person name="Bebelman J.-P."/>
            <person name="Heerikhuizen H."/>
            <person name="Andersen H.A."/>
            <person name="Planta R.J."/>
        </authorList>
    </citation>
    <scope>FUNCTION IN TRANSCRIPTION REGULATION</scope>
</reference>
<reference key="9">
    <citation type="journal article" date="2001" name="Mol. Gen. Genet.">
        <title>Transcriptional regulation of the Saccharomyces cerevisiae amino acid permease gene BAP2.</title>
        <authorList>
            <person name="Nielsen P.S."/>
            <person name="van den Hazel B."/>
            <person name="Didion T."/>
            <person name="de Boer M."/>
            <person name="Joergensen M.U."/>
            <person name="Planta R.J."/>
            <person name="Kielland-Brandt M.C."/>
            <person name="Andersen H.A."/>
        </authorList>
    </citation>
    <scope>DNA-BINDING</scope>
</reference>
<reference key="10">
    <citation type="journal article" date="2002" name="Genes Dev.">
        <title>Receptor-mediated endoproteolytic activation of two transcription factors in yeast.</title>
        <authorList>
            <person name="Andreasson C."/>
            <person name="Ljungdahl P.O."/>
        </authorList>
    </citation>
    <scope>PROTEOLYTIC PROCESSING</scope>
    <scope>IDENTIFICATION OF INITIATION SITE</scope>
    <scope>MUTAGENESIS OF 9-PRO--PHE-66</scope>
    <scope>SUBCELLULAR LOCATION</scope>
</reference>
<reference key="11">
    <citation type="journal article" date="2003" name="Nature">
        <title>Sequencing and comparison of yeast species to identify genes and regulatory elements.</title>
        <authorList>
            <person name="Kellis M."/>
            <person name="Patterson N."/>
            <person name="Endrizzi M."/>
            <person name="Birren B.W."/>
            <person name="Lander E.S."/>
        </authorList>
    </citation>
    <scope>IDENTIFICATION OF PROBABLE INITIATION SITE</scope>
</reference>
<reference key="12">
    <citation type="journal article" date="2003" name="Nature">
        <title>Global analysis of protein localization in budding yeast.</title>
        <authorList>
            <person name="Huh W.-K."/>
            <person name="Falvo J.V."/>
            <person name="Gerke L.C."/>
            <person name="Carroll A.S."/>
            <person name="Howson R.W."/>
            <person name="Weissman J.S."/>
            <person name="O'Shea E.K."/>
        </authorList>
    </citation>
    <scope>SUBCELLULAR LOCATION [LARGE SCALE ANALYSIS]</scope>
</reference>
<reference key="13">
    <citation type="journal article" date="2003" name="Nature">
        <title>Global analysis of protein expression in yeast.</title>
        <authorList>
            <person name="Ghaemmaghami S."/>
            <person name="Huh W.-K."/>
            <person name="Bower K."/>
            <person name="Howson R.W."/>
            <person name="Belle A."/>
            <person name="Dephoure N."/>
            <person name="O'Shea E.K."/>
            <person name="Weissman J.S."/>
        </authorList>
    </citation>
    <scope>LEVEL OF PROTEIN EXPRESSION [LARGE SCALE ANALYSIS]</scope>
</reference>
<reference key="14">
    <citation type="journal article" date="2003" name="Science">
        <title>Finding functional features in Saccharomyces genomes by phylogenetic footprinting.</title>
        <authorList>
            <person name="Cliften P.F."/>
            <person name="Sudarsanam P."/>
            <person name="Desikan A."/>
            <person name="Fulton L."/>
            <person name="Fulton B."/>
            <person name="Majors J."/>
            <person name="Waterston R."/>
            <person name="Cohen B.A."/>
            <person name="Johnston M."/>
        </authorList>
    </citation>
    <scope>IDENTIFICATION OF PROBABLE INITIATION SITE</scope>
</reference>
<reference key="15">
    <citation type="journal article" date="2004" name="Genetics">
        <title>The external amino acid signaling pathway promotes activation of Stp1 and Uga35/Dal81 transcription factors for induction of the AGP1 gene in Saccharomyces cerevisiae.</title>
        <authorList>
            <person name="Abdel-Sater F."/>
            <person name="Iraqui I."/>
            <person name="Urrestarazu A."/>
            <person name="Andre B."/>
        </authorList>
    </citation>
    <scope>FUNCTION</scope>
</reference>
<reference key="16">
    <citation type="journal article" date="2004" name="Mol. Cell. Biol.">
        <title>The N-terminal regulatory domain of Stp1p is modular and, fused to an artificial transcription factor, confers full Ssy1p-Ptr3p-Ssy5p sensor control.</title>
        <authorList>
            <person name="Andreasson C."/>
            <person name="Ljungdahl P.O."/>
        </authorList>
    </citation>
    <scope>FUNCTION</scope>
    <scope>MUTAGENESIS OF 27-LEU--ILE-32; LEU-65; PHE-66 AND PRO-67</scope>
</reference>
<reference key="17">
    <citation type="journal article" date="2004" name="Mol. Cell. Biol.">
        <title>Amino acid signaling in yeast: casein kinase I and the Ssy5 endoprotease are key determinants of endoproteolytic activation of the membrane-bound Stp1 transcription factor.</title>
        <authorList>
            <person name="Abdel-Sater F."/>
            <person name="El Bakkoury M."/>
            <person name="Urrestarazu A."/>
            <person name="Vissers S."/>
            <person name="Andre B."/>
        </authorList>
    </citation>
    <scope>PROTEOLYTIC CLEAVAGE BY SSY5</scope>
    <scope>PHOSPHORYLATION BY CKI</scope>
</reference>
<reference key="18">
    <citation type="journal article" date="2004" name="Yeast">
        <title>Transcriptional profiling of extracellular amino acid sensing in Saccharomyces cerevisiae and the role of Stp1p and Stp2p.</title>
        <authorList>
            <person name="Eckert-Boulet N."/>
            <person name="Nielsen P.S."/>
            <person name="Friis C."/>
            <person name="dos Santos M.M."/>
            <person name="Nielsen J."/>
            <person name="Kielland-Brandt M.C."/>
            <person name="Regenberg B."/>
        </authorList>
    </citation>
    <scope>FUNCTION</scope>
    <scope>SUBCELLULAR LOCATION</scope>
</reference>
<reference key="19">
    <citation type="journal article" date="2006" name="EMBO J.">
        <title>Substrate-mediated remodeling of methionine transport by multiple ubiquitin-dependent mechanisms in yeast cells.</title>
        <authorList>
            <person name="Menant A."/>
            <person name="Barbey R."/>
            <person name="Thomas D."/>
        </authorList>
    </citation>
    <scope>FUNCTION</scope>
    <scope>SUBCELLULAR LOCATION</scope>
</reference>
<reference key="20">
    <citation type="journal article" date="2006" name="Eukaryot. Cell">
        <title>Deletion of RTS1, encoding a regulatory subunit of protein phosphatase 2A, results in constitutive amino acid signaling via increased Stp1p processing.</title>
        <authorList>
            <person name="Eckert-Boulet N."/>
            <person name="Larsson K."/>
            <person name="Wu B."/>
            <person name="Poulsen P."/>
            <person name="Regenberg B."/>
            <person name="Nielsen J."/>
            <person name="Kielland-Brandt M.C."/>
        </authorList>
    </citation>
    <scope>FUNCTION</scope>
</reference>
<reference key="21">
    <citation type="journal article" date="2006" name="Genes Dev.">
        <title>Regulation of transcription factor latency by receptor-activated proteolysis.</title>
        <authorList>
            <person name="Andreasson C."/>
            <person name="Heessen S."/>
            <person name="Ljungdahl P.O."/>
        </authorList>
    </citation>
    <scope>INTERACTION WITH SSY5</scope>
</reference>
<reference key="22">
    <citation type="journal article" date="2006" name="J. Cell Biol.">
        <title>Asi1 is an inner nuclear membrane protein that restricts promoter access of two latent transcription factors.</title>
        <authorList>
            <person name="Boban M."/>
            <person name="Zargari A."/>
            <person name="Andreasson C."/>
            <person name="Heessen S."/>
            <person name="Thyberg J."/>
            <person name="Ljungdahl P.O."/>
        </authorList>
    </citation>
    <scope>FUNCTION</scope>
    <scope>SUBCELLULAR LOCATION</scope>
</reference>
<reference key="23">
    <citation type="journal article" date="2007" name="Genetics">
        <title>Dal81 enhances Stp1- and Stp2-dependent transcription necessitating negative modulation by inner nuclear membrane protein Asi1 in Saccharomyces cerevisiae.</title>
        <authorList>
            <person name="Boban M."/>
            <person name="Ljungdahl P.O."/>
        </authorList>
    </citation>
    <scope>DNA-BINDING</scope>
    <scope>SUBCELLULAR LOCATION OF MUTANT STP1-133</scope>
</reference>
<reference key="24">
    <citation type="journal article" date="2007" name="J. Biol. Chem.">
        <title>Inner nuclear membrane proteins Asi1, Asi2, and Asi3 function in concert to maintain the latent properties of transcription factors Stp1 and Stp2.</title>
        <authorList>
            <person name="Zargari A."/>
            <person name="Boban M."/>
            <person name="Heessen S."/>
            <person name="Andreasson C."/>
            <person name="Thyberg J."/>
            <person name="Ljungdahl P.O."/>
        </authorList>
    </citation>
    <scope>FUNCTION</scope>
</reference>
<organism>
    <name type="scientific">Saccharomyces cerevisiae (strain ATCC 204508 / S288c)</name>
    <name type="common">Baker's yeast</name>
    <dbReference type="NCBI Taxonomy" id="559292"/>
    <lineage>
        <taxon>Eukaryota</taxon>
        <taxon>Fungi</taxon>
        <taxon>Dikarya</taxon>
        <taxon>Ascomycota</taxon>
        <taxon>Saccharomycotina</taxon>
        <taxon>Saccharomycetes</taxon>
        <taxon>Saccharomycetales</taxon>
        <taxon>Saccharomycetaceae</taxon>
        <taxon>Saccharomyces</taxon>
    </lineage>
</organism>
<keyword id="KW-1003">Cell membrane</keyword>
<keyword id="KW-0238">DNA-binding</keyword>
<keyword id="KW-0472">Membrane</keyword>
<keyword id="KW-0479">Metal-binding</keyword>
<keyword id="KW-0539">Nucleus</keyword>
<keyword id="KW-0597">Phosphoprotein</keyword>
<keyword id="KW-1185">Reference proteome</keyword>
<keyword id="KW-0677">Repeat</keyword>
<keyword id="KW-0819">tRNA processing</keyword>
<keyword id="KW-0862">Zinc</keyword>
<keyword id="KW-0863">Zinc-finger</keyword>
<keyword id="KW-0865">Zymogen</keyword>
<evidence type="ECO:0000255" key="1">
    <source>
        <dbReference type="PROSITE-ProRule" id="PRU00042"/>
    </source>
</evidence>
<evidence type="ECO:0000256" key="2">
    <source>
        <dbReference type="SAM" id="MobiDB-lite"/>
    </source>
</evidence>
<evidence type="ECO:0000269" key="3">
    <source>
    </source>
</evidence>
<evidence type="ECO:0000269" key="4">
    <source>
    </source>
</evidence>
<evidence type="ECO:0000269" key="5">
    <source>
    </source>
</evidence>
<evidence type="ECO:0000269" key="6">
    <source>
    </source>
</evidence>
<evidence type="ECO:0000269" key="7">
    <source>
    </source>
</evidence>
<evidence type="ECO:0000269" key="8">
    <source>
    </source>
</evidence>
<evidence type="ECO:0000269" key="9">
    <source>
    </source>
</evidence>
<evidence type="ECO:0000269" key="10">
    <source>
    </source>
</evidence>
<evidence type="ECO:0000269" key="11">
    <source>
    </source>
</evidence>
<evidence type="ECO:0000269" key="12">
    <source>
    </source>
</evidence>
<evidence type="ECO:0000269" key="13">
    <source>
    </source>
</evidence>
<evidence type="ECO:0000269" key="14">
    <source>
    </source>
</evidence>
<evidence type="ECO:0000269" key="15">
    <source>
    </source>
</evidence>
<evidence type="ECO:0000269" key="16">
    <source>
    </source>
</evidence>
<evidence type="ECO:0000269" key="17">
    <source>
    </source>
</evidence>
<evidence type="ECO:0000269" key="18">
    <source>
    </source>
</evidence>
<evidence type="ECO:0000305" key="19"/>
<evidence type="ECO:0000305" key="20">
    <source>
    </source>
</evidence>
<feature type="propeptide" id="PRO_0000377642">
    <location>
        <begin position="1"/>
        <end status="unknown"/>
    </location>
</feature>
<feature type="chain" id="PRO_0000046853" description="Transcription factor STP1">
    <location>
        <begin status="unknown"/>
        <end position="519"/>
    </location>
</feature>
<feature type="zinc finger region" description="C2H2-type 1" evidence="1">
    <location>
        <begin position="160"/>
        <end position="182"/>
    </location>
</feature>
<feature type="zinc finger region" description="C2H2-type 2; atypical" evidence="1">
    <location>
        <begin position="188"/>
        <end position="223"/>
    </location>
</feature>
<feature type="zinc finger region" description="C2H2-type 3; atypical" evidence="1">
    <location>
        <begin position="240"/>
        <end position="265"/>
    </location>
</feature>
<feature type="region of interest" description="I">
    <location>
        <begin position="16"/>
        <end position="35"/>
    </location>
</feature>
<feature type="region of interest" description="Disordered" evidence="2">
    <location>
        <begin position="47"/>
        <end position="69"/>
    </location>
</feature>
<feature type="region of interest" description="II">
    <location>
        <begin position="65"/>
        <end position="97"/>
    </location>
</feature>
<feature type="region of interest" description="Disordered" evidence="2">
    <location>
        <begin position="115"/>
        <end position="150"/>
    </location>
</feature>
<feature type="region of interest" description="Disordered" evidence="2">
    <location>
        <begin position="357"/>
        <end position="382"/>
    </location>
</feature>
<feature type="compositionally biased region" description="Basic and acidic residues" evidence="2">
    <location>
        <begin position="47"/>
        <end position="61"/>
    </location>
</feature>
<feature type="compositionally biased region" description="Low complexity" evidence="2">
    <location>
        <begin position="131"/>
        <end position="146"/>
    </location>
</feature>
<feature type="compositionally biased region" description="Polar residues" evidence="2">
    <location>
        <begin position="364"/>
        <end position="381"/>
    </location>
</feature>
<feature type="mutagenesis site" description="In ASI13-1; dominant active and constitutively nuclear localized transcription factor." evidence="4">
    <location>
        <begin position="9"/>
        <end position="66"/>
    </location>
</feature>
<feature type="mutagenesis site" description="In STP1-133; impairs cytoplasmic retention, resulting in a dominant active transcription factor. Activates transcription also in its unprocessed form; when associated with A-66." evidence="8">
    <original>LVSGVI</original>
    <variation>AASGAA</variation>
    <location>
        <begin position="27"/>
        <end position="32"/>
    </location>
</feature>
<feature type="mutagenesis site" description="No effect." evidence="8">
    <original>L</original>
    <variation>A</variation>
    <location>
        <position position="65"/>
    </location>
</feature>
<feature type="mutagenesis site" description="In STP1-102; prevents proteolytic processing. Activates transcription also in its unprocessed form; when associated with 27-AASGAA-32." evidence="8">
    <original>F</original>
    <variation>A</variation>
    <location>
        <position position="66"/>
    </location>
</feature>
<feature type="mutagenesis site" description="No effect." evidence="8">
    <original>P</original>
    <variation>A</variation>
    <location>
        <position position="67"/>
    </location>
</feature>